<accession>Q9P6R2</accession>
<keyword id="KW-0539">Nucleus</keyword>
<keyword id="KW-1185">Reference proteome</keyword>
<organism>
    <name type="scientific">Schizosaccharomyces pombe (strain 972 / ATCC 24843)</name>
    <name type="common">Fission yeast</name>
    <dbReference type="NCBI Taxonomy" id="284812"/>
    <lineage>
        <taxon>Eukaryota</taxon>
        <taxon>Fungi</taxon>
        <taxon>Dikarya</taxon>
        <taxon>Ascomycota</taxon>
        <taxon>Taphrinomycotina</taxon>
        <taxon>Schizosaccharomycetes</taxon>
        <taxon>Schizosaccharomycetales</taxon>
        <taxon>Schizosaccharomycetaceae</taxon>
        <taxon>Schizosaccharomyces</taxon>
    </lineage>
</organism>
<reference key="1">
    <citation type="journal article" date="2002" name="Nature">
        <title>The genome sequence of Schizosaccharomyces pombe.</title>
        <authorList>
            <person name="Wood V."/>
            <person name="Gwilliam R."/>
            <person name="Rajandream M.A."/>
            <person name="Lyne M.H."/>
            <person name="Lyne R."/>
            <person name="Stewart A."/>
            <person name="Sgouros J.G."/>
            <person name="Peat N."/>
            <person name="Hayles J."/>
            <person name="Baker S.G."/>
            <person name="Basham D."/>
            <person name="Bowman S."/>
            <person name="Brooks K."/>
            <person name="Brown D."/>
            <person name="Brown S."/>
            <person name="Chillingworth T."/>
            <person name="Churcher C.M."/>
            <person name="Collins M."/>
            <person name="Connor R."/>
            <person name="Cronin A."/>
            <person name="Davis P."/>
            <person name="Feltwell T."/>
            <person name="Fraser A."/>
            <person name="Gentles S."/>
            <person name="Goble A."/>
            <person name="Hamlin N."/>
            <person name="Harris D.E."/>
            <person name="Hidalgo J."/>
            <person name="Hodgson G."/>
            <person name="Holroyd S."/>
            <person name="Hornsby T."/>
            <person name="Howarth S."/>
            <person name="Huckle E.J."/>
            <person name="Hunt S."/>
            <person name="Jagels K."/>
            <person name="James K.D."/>
            <person name="Jones L."/>
            <person name="Jones M."/>
            <person name="Leather S."/>
            <person name="McDonald S."/>
            <person name="McLean J."/>
            <person name="Mooney P."/>
            <person name="Moule S."/>
            <person name="Mungall K.L."/>
            <person name="Murphy L.D."/>
            <person name="Niblett D."/>
            <person name="Odell C."/>
            <person name="Oliver K."/>
            <person name="O'Neil S."/>
            <person name="Pearson D."/>
            <person name="Quail M.A."/>
            <person name="Rabbinowitsch E."/>
            <person name="Rutherford K.M."/>
            <person name="Rutter S."/>
            <person name="Saunders D."/>
            <person name="Seeger K."/>
            <person name="Sharp S."/>
            <person name="Skelton J."/>
            <person name="Simmonds M.N."/>
            <person name="Squares R."/>
            <person name="Squares S."/>
            <person name="Stevens K."/>
            <person name="Taylor K."/>
            <person name="Taylor R.G."/>
            <person name="Tivey A."/>
            <person name="Walsh S.V."/>
            <person name="Warren T."/>
            <person name="Whitehead S."/>
            <person name="Woodward J.R."/>
            <person name="Volckaert G."/>
            <person name="Aert R."/>
            <person name="Robben J."/>
            <person name="Grymonprez B."/>
            <person name="Weltjens I."/>
            <person name="Vanstreels E."/>
            <person name="Rieger M."/>
            <person name="Schaefer M."/>
            <person name="Mueller-Auer S."/>
            <person name="Gabel C."/>
            <person name="Fuchs M."/>
            <person name="Duesterhoeft A."/>
            <person name="Fritzc C."/>
            <person name="Holzer E."/>
            <person name="Moestl D."/>
            <person name="Hilbert H."/>
            <person name="Borzym K."/>
            <person name="Langer I."/>
            <person name="Beck A."/>
            <person name="Lehrach H."/>
            <person name="Reinhardt R."/>
            <person name="Pohl T.M."/>
            <person name="Eger P."/>
            <person name="Zimmermann W."/>
            <person name="Wedler H."/>
            <person name="Wambutt R."/>
            <person name="Purnelle B."/>
            <person name="Goffeau A."/>
            <person name="Cadieu E."/>
            <person name="Dreano S."/>
            <person name="Gloux S."/>
            <person name="Lelaure V."/>
            <person name="Mottier S."/>
            <person name="Galibert F."/>
            <person name="Aves S.J."/>
            <person name="Xiang Z."/>
            <person name="Hunt C."/>
            <person name="Moore K."/>
            <person name="Hurst S.M."/>
            <person name="Lucas M."/>
            <person name="Rochet M."/>
            <person name="Gaillardin C."/>
            <person name="Tallada V.A."/>
            <person name="Garzon A."/>
            <person name="Thode G."/>
            <person name="Daga R.R."/>
            <person name="Cruzado L."/>
            <person name="Jimenez J."/>
            <person name="Sanchez M."/>
            <person name="del Rey F."/>
            <person name="Benito J."/>
            <person name="Dominguez A."/>
            <person name="Revuelta J.L."/>
            <person name="Moreno S."/>
            <person name="Armstrong J."/>
            <person name="Forsburg S.L."/>
            <person name="Cerutti L."/>
            <person name="Lowe T."/>
            <person name="McCombie W.R."/>
            <person name="Paulsen I."/>
            <person name="Potashkin J."/>
            <person name="Shpakovski G.V."/>
            <person name="Ussery D."/>
            <person name="Barrell B.G."/>
            <person name="Nurse P."/>
        </authorList>
    </citation>
    <scope>NUCLEOTIDE SEQUENCE [LARGE SCALE GENOMIC DNA]</scope>
    <source>
        <strain>972 / ATCC 24843</strain>
    </source>
</reference>
<reference key="2">
    <citation type="journal article" date="2006" name="Nat. Biotechnol.">
        <title>ORFeome cloning and global analysis of protein localization in the fission yeast Schizosaccharomyces pombe.</title>
        <authorList>
            <person name="Matsuyama A."/>
            <person name="Arai R."/>
            <person name="Yashiroda Y."/>
            <person name="Shirai A."/>
            <person name="Kamata A."/>
            <person name="Sekido S."/>
            <person name="Kobayashi Y."/>
            <person name="Hashimoto A."/>
            <person name="Hamamoto M."/>
            <person name="Hiraoka Y."/>
            <person name="Horinouchi S."/>
            <person name="Yoshida M."/>
        </authorList>
    </citation>
    <scope>SUBCELLULAR LOCATION [LARGE SCALE ANALYSIS]</scope>
</reference>
<dbReference type="EMBL" id="CU329671">
    <property type="protein sequence ID" value="CAB89883.1"/>
    <property type="molecule type" value="Genomic_DNA"/>
</dbReference>
<dbReference type="BioGRID" id="276278">
    <property type="interactions" value="98"/>
</dbReference>
<dbReference type="FunCoup" id="Q9P6R2">
    <property type="interactions" value="279"/>
</dbReference>
<dbReference type="IntAct" id="Q9P6R2">
    <property type="interactions" value="1"/>
</dbReference>
<dbReference type="STRING" id="284812.Q9P6R2"/>
<dbReference type="iPTMnet" id="Q9P6R2"/>
<dbReference type="PaxDb" id="4896-SPBC13E7.08c.1"/>
<dbReference type="EnsemblFungi" id="SPBC13E7.08c.1">
    <property type="protein sequence ID" value="SPBC13E7.08c.1:pep"/>
    <property type="gene ID" value="SPBC13E7.08c"/>
</dbReference>
<dbReference type="KEGG" id="spo:2539726"/>
<dbReference type="PomBase" id="SPBC13E7.08c"/>
<dbReference type="VEuPathDB" id="FungiDB:SPBC13E7.08c"/>
<dbReference type="eggNOG" id="KOG2428">
    <property type="taxonomic scope" value="Eukaryota"/>
</dbReference>
<dbReference type="HOGENOM" id="CLU_639614_0_0_1"/>
<dbReference type="InParanoid" id="Q9P6R2"/>
<dbReference type="OMA" id="TNIYRWS"/>
<dbReference type="PhylomeDB" id="Q9P6R2"/>
<dbReference type="PRO" id="PR:Q9P6R2"/>
<dbReference type="Proteomes" id="UP000002485">
    <property type="component" value="Chromosome II"/>
</dbReference>
<dbReference type="GO" id="GO:0016593">
    <property type="term" value="C:Cdc73/Paf1 complex"/>
    <property type="evidence" value="ECO:0000353"/>
    <property type="project" value="PomBase"/>
</dbReference>
<dbReference type="GO" id="GO:0005634">
    <property type="term" value="C:nucleus"/>
    <property type="evidence" value="ECO:0007005"/>
    <property type="project" value="PomBase"/>
</dbReference>
<dbReference type="GO" id="GO:0003723">
    <property type="term" value="F:RNA binding"/>
    <property type="evidence" value="ECO:0000266"/>
    <property type="project" value="PomBase"/>
</dbReference>
<dbReference type="GO" id="GO:1990269">
    <property type="term" value="F:RNA polymerase II C-terminal domain phosphoserine binding"/>
    <property type="evidence" value="ECO:0000318"/>
    <property type="project" value="GO_Central"/>
</dbReference>
<dbReference type="GO" id="GO:0033696">
    <property type="term" value="P:heterochromatin boundary formation"/>
    <property type="evidence" value="ECO:0000315"/>
    <property type="project" value="PomBase"/>
</dbReference>
<dbReference type="GO" id="GO:0070828">
    <property type="term" value="P:heterochromatin organization"/>
    <property type="evidence" value="ECO:0000269"/>
    <property type="project" value="PomBase"/>
</dbReference>
<dbReference type="GO" id="GO:0032968">
    <property type="term" value="P:positive regulation of transcription elongation by RNA polymerase II"/>
    <property type="evidence" value="ECO:0000318"/>
    <property type="project" value="GO_Central"/>
</dbReference>
<dbReference type="GO" id="GO:0006368">
    <property type="term" value="P:transcription elongation by RNA polymerase II"/>
    <property type="evidence" value="ECO:0007669"/>
    <property type="project" value="InterPro"/>
</dbReference>
<dbReference type="InterPro" id="IPR007149">
    <property type="entry name" value="Leo1"/>
</dbReference>
<dbReference type="PANTHER" id="PTHR23146">
    <property type="entry name" value="LEO1 PROTEIN"/>
    <property type="match status" value="1"/>
</dbReference>
<dbReference type="PANTHER" id="PTHR23146:SF0">
    <property type="entry name" value="RNA POLYMERASE-ASSOCIATED PROTEIN LEO1"/>
    <property type="match status" value="1"/>
</dbReference>
<dbReference type="Pfam" id="PF04004">
    <property type="entry name" value="Leo1"/>
    <property type="match status" value="1"/>
</dbReference>
<name>YOH8_SCHPO</name>
<feature type="chain" id="PRO_0000316238" description="Uncharacterized protein C13E7.08c">
    <location>
        <begin position="1"/>
        <end position="429"/>
    </location>
</feature>
<feature type="region of interest" description="Disordered" evidence="1">
    <location>
        <begin position="1"/>
        <end position="63"/>
    </location>
</feature>
<feature type="region of interest" description="Disordered" evidence="1">
    <location>
        <begin position="257"/>
        <end position="306"/>
    </location>
</feature>
<feature type="region of interest" description="Disordered" evidence="1">
    <location>
        <begin position="320"/>
        <end position="429"/>
    </location>
</feature>
<feature type="compositionally biased region" description="Basic and acidic residues" evidence="1">
    <location>
        <begin position="1"/>
        <end position="12"/>
    </location>
</feature>
<feature type="compositionally biased region" description="Acidic residues" evidence="1">
    <location>
        <begin position="328"/>
        <end position="362"/>
    </location>
</feature>
<feature type="compositionally biased region" description="Basic and acidic residues" evidence="1">
    <location>
        <begin position="369"/>
        <end position="378"/>
    </location>
</feature>
<gene>
    <name type="ORF">SPBC13E7.08c</name>
</gene>
<comment type="subcellular location">
    <subcellularLocation>
        <location evidence="2">Nucleus</location>
    </subcellularLocation>
</comment>
<comment type="similarity">
    <text evidence="3">Belongs to the LEO1 family.</text>
</comment>
<proteinExistence type="inferred from homology"/>
<evidence type="ECO:0000256" key="1">
    <source>
        <dbReference type="SAM" id="MobiDB-lite"/>
    </source>
</evidence>
<evidence type="ECO:0000269" key="2">
    <source>
    </source>
</evidence>
<evidence type="ECO:0000305" key="3"/>
<sequence length="429" mass="48733">MSDSKEDIRNGQEEDDLFSENEDNHTSQQDELINGHIENDSETAVSDDGLFSNTEEATEAPEADVPVKKVLEVAVPNFKSPASASNDVFHAHIPNFLSVEQTPYDPEQYAAEAEADAALLEHDAHWGQRIKHKVDNTVRWRLGPSGSYQSNAQIVQWSDGSYSLRIGNDIYDTQNKLISQPTFVTASHEAQHLLRVQTSFKSSFTFLPSAINTATRSKLPSMRLTTVQVPSRSVQEIIIEKDPELLKRQAEKYEEERSRARRRLEKRKQLNNYQNGTGEEEEDYSSFYGPRSTYSEQNEIIDSDRMDRLKRIKQEGAGQYRGYNKDLEENEEDDLGDFIAEEEEEEEQEEEQEEDEEDEEEVGAGSDIKGFDADKEASVARATINKYEDDEVIPSAVETDRSETVTETSVGDGSVQRRVKRRIVESDSE</sequence>
<protein>
    <recommendedName>
        <fullName>Uncharacterized protein C13E7.08c</fullName>
    </recommendedName>
</protein>